<comment type="function">
    <text evidence="1">Produces ATP from ADP in the presence of a proton gradient across the membrane. The catalytic sites are hosted primarily by the beta subunits.</text>
</comment>
<comment type="catalytic activity">
    <reaction evidence="1">
        <text>ATP + H2O + 4 H(+)(in) = ADP + phosphate + 5 H(+)(out)</text>
        <dbReference type="Rhea" id="RHEA:57720"/>
        <dbReference type="ChEBI" id="CHEBI:15377"/>
        <dbReference type="ChEBI" id="CHEBI:15378"/>
        <dbReference type="ChEBI" id="CHEBI:30616"/>
        <dbReference type="ChEBI" id="CHEBI:43474"/>
        <dbReference type="ChEBI" id="CHEBI:456216"/>
        <dbReference type="EC" id="7.1.2.2"/>
    </reaction>
</comment>
<comment type="subunit">
    <text evidence="1">F-type ATPases have 2 components, CF(1) - the catalytic core - and CF(0) - the membrane proton channel. CF(1) has five subunits: alpha(3), beta(3), gamma(1), delta(1), epsilon(1). CF(0) has four main subunits: a(1), b(1), b'(1) and c(9-12).</text>
</comment>
<comment type="subcellular location">
    <subcellularLocation>
        <location evidence="1">Cell inner membrane</location>
        <topology evidence="1">Peripheral membrane protein</topology>
    </subcellularLocation>
</comment>
<comment type="similarity">
    <text evidence="1">Belongs to the ATPase alpha/beta chains family.</text>
</comment>
<keyword id="KW-0066">ATP synthesis</keyword>
<keyword id="KW-0067">ATP-binding</keyword>
<keyword id="KW-0997">Cell inner membrane</keyword>
<keyword id="KW-1003">Cell membrane</keyword>
<keyword id="KW-0139">CF(1)</keyword>
<keyword id="KW-0375">Hydrogen ion transport</keyword>
<keyword id="KW-0406">Ion transport</keyword>
<keyword id="KW-0472">Membrane</keyword>
<keyword id="KW-0547">Nucleotide-binding</keyword>
<keyword id="KW-1185">Reference proteome</keyword>
<keyword id="KW-1278">Translocase</keyword>
<keyword id="KW-0813">Transport</keyword>
<gene>
    <name evidence="1" type="primary">atpD</name>
    <name type="ordered locus">Rru_A1226</name>
</gene>
<organism>
    <name type="scientific">Rhodospirillum rubrum (strain ATCC 11170 / ATH 1.1.1 / DSM 467 / LMG 4362 / NCIMB 8255 / S1)</name>
    <dbReference type="NCBI Taxonomy" id="269796"/>
    <lineage>
        <taxon>Bacteria</taxon>
        <taxon>Pseudomonadati</taxon>
        <taxon>Pseudomonadota</taxon>
        <taxon>Alphaproteobacteria</taxon>
        <taxon>Rhodospirillales</taxon>
        <taxon>Rhodospirillaceae</taxon>
        <taxon>Rhodospirillum</taxon>
    </lineage>
</organism>
<feature type="chain" id="PRO_0000254361" description="ATP synthase subunit beta">
    <location>
        <begin position="1"/>
        <end position="474"/>
    </location>
</feature>
<feature type="binding site" evidence="1">
    <location>
        <begin position="152"/>
        <end position="159"/>
    </location>
    <ligand>
        <name>ATP</name>
        <dbReference type="ChEBI" id="CHEBI:30616"/>
    </ligand>
</feature>
<reference key="1">
    <citation type="journal article" date="2011" name="Stand. Genomic Sci.">
        <title>Complete genome sequence of Rhodospirillum rubrum type strain (S1).</title>
        <authorList>
            <person name="Munk A.C."/>
            <person name="Copeland A."/>
            <person name="Lucas S."/>
            <person name="Lapidus A."/>
            <person name="Del Rio T.G."/>
            <person name="Barry K."/>
            <person name="Detter J.C."/>
            <person name="Hammon N."/>
            <person name="Israni S."/>
            <person name="Pitluck S."/>
            <person name="Brettin T."/>
            <person name="Bruce D."/>
            <person name="Han C."/>
            <person name="Tapia R."/>
            <person name="Gilna P."/>
            <person name="Schmutz J."/>
            <person name="Larimer F."/>
            <person name="Land M."/>
            <person name="Kyrpides N.C."/>
            <person name="Mavromatis K."/>
            <person name="Richardson P."/>
            <person name="Rohde M."/>
            <person name="Goeker M."/>
            <person name="Klenk H.P."/>
            <person name="Zhang Y."/>
            <person name="Roberts G.P."/>
            <person name="Reslewic S."/>
            <person name="Schwartz D.C."/>
        </authorList>
    </citation>
    <scope>NUCLEOTIDE SEQUENCE [LARGE SCALE GENOMIC DNA]</scope>
    <source>
        <strain>ATCC 11170 / ATH 1.1.1 / DSM 467 / LMG 4362 / NCIMB 8255 / S1</strain>
    </source>
</reference>
<proteinExistence type="inferred from homology"/>
<sequence>MAKNNLGTITQVTGAVVDVKFEGELPSILSALETDNHGNRLVLEVAQHLGESVVRTIAMDSTEGLVRGQQVTSTGGPITVPVGPQVLGRIMNVIGEPVDERGPVVTAQRYPIHRQAPTFAEQATETEILVTGIKVIDLIAPYTKGGKVGLFGGAGVGKTVLIQELINNVAKGHGGYSVFAGVGERTREGNDLYHEMIDAGIIDLEGDKSKVALVYGQMNEPPGARARVALAGLTQAEYFRDEEGQDVLFFVDNIFRFTQAGSEVSALLGRIPSAVGYQPTLATDMGALQERITSTKKGSITSVQAIYVPADDLTDPAPAASFAHLDATTTLNRSIAELGIYPAVDPLDSTSRALDPLVVGEEHYKVAREVQRVLQTYKSLQDIIAILGMDELSEEDRLVVARARKIQRFLSQPFHVAEVFTGSPGKLVSLEDTIKGFKGLVEGEYDHLPEQAFYMVGNMAEAIEKAKKMAAEAA</sequence>
<evidence type="ECO:0000255" key="1">
    <source>
        <dbReference type="HAMAP-Rule" id="MF_01347"/>
    </source>
</evidence>
<name>ATPB_RHORT</name>
<protein>
    <recommendedName>
        <fullName evidence="1">ATP synthase subunit beta</fullName>
        <ecNumber evidence="1">7.1.2.2</ecNumber>
    </recommendedName>
    <alternativeName>
        <fullName evidence="1">ATP synthase F1 sector subunit beta</fullName>
    </alternativeName>
    <alternativeName>
        <fullName evidence="1">F-ATPase subunit beta</fullName>
    </alternativeName>
</protein>
<accession>Q2RV18</accession>
<dbReference type="EC" id="7.1.2.2" evidence="1"/>
<dbReference type="EMBL" id="CP000230">
    <property type="protein sequence ID" value="ABC22027.1"/>
    <property type="molecule type" value="Genomic_DNA"/>
</dbReference>
<dbReference type="RefSeq" id="WP_011388981.1">
    <property type="nucleotide sequence ID" value="NC_007643.1"/>
</dbReference>
<dbReference type="RefSeq" id="YP_426314.1">
    <property type="nucleotide sequence ID" value="NC_007643.1"/>
</dbReference>
<dbReference type="SMR" id="Q2RV18"/>
<dbReference type="STRING" id="269796.Rru_A1226"/>
<dbReference type="EnsemblBacteria" id="ABC22027">
    <property type="protein sequence ID" value="ABC22027"/>
    <property type="gene ID" value="Rru_A1226"/>
</dbReference>
<dbReference type="KEGG" id="rru:Rru_A1226"/>
<dbReference type="PATRIC" id="fig|269796.9.peg.1291"/>
<dbReference type="eggNOG" id="COG0055">
    <property type="taxonomic scope" value="Bacteria"/>
</dbReference>
<dbReference type="HOGENOM" id="CLU_022398_0_2_5"/>
<dbReference type="PhylomeDB" id="Q2RV18"/>
<dbReference type="Proteomes" id="UP000001929">
    <property type="component" value="Chromosome"/>
</dbReference>
<dbReference type="GO" id="GO:0005886">
    <property type="term" value="C:plasma membrane"/>
    <property type="evidence" value="ECO:0007669"/>
    <property type="project" value="UniProtKB-SubCell"/>
</dbReference>
<dbReference type="GO" id="GO:0045259">
    <property type="term" value="C:proton-transporting ATP synthase complex"/>
    <property type="evidence" value="ECO:0007669"/>
    <property type="project" value="UniProtKB-KW"/>
</dbReference>
<dbReference type="GO" id="GO:0005524">
    <property type="term" value="F:ATP binding"/>
    <property type="evidence" value="ECO:0007669"/>
    <property type="project" value="UniProtKB-UniRule"/>
</dbReference>
<dbReference type="GO" id="GO:0016887">
    <property type="term" value="F:ATP hydrolysis activity"/>
    <property type="evidence" value="ECO:0007669"/>
    <property type="project" value="InterPro"/>
</dbReference>
<dbReference type="GO" id="GO:0046933">
    <property type="term" value="F:proton-transporting ATP synthase activity, rotational mechanism"/>
    <property type="evidence" value="ECO:0007669"/>
    <property type="project" value="UniProtKB-UniRule"/>
</dbReference>
<dbReference type="CDD" id="cd18110">
    <property type="entry name" value="ATP-synt_F1_beta_C"/>
    <property type="match status" value="1"/>
</dbReference>
<dbReference type="CDD" id="cd18115">
    <property type="entry name" value="ATP-synt_F1_beta_N"/>
    <property type="match status" value="1"/>
</dbReference>
<dbReference type="CDD" id="cd01133">
    <property type="entry name" value="F1-ATPase_beta_CD"/>
    <property type="match status" value="1"/>
</dbReference>
<dbReference type="FunFam" id="1.10.1140.10:FF:000001">
    <property type="entry name" value="ATP synthase subunit beta"/>
    <property type="match status" value="1"/>
</dbReference>
<dbReference type="FunFam" id="3.40.50.300:FF:000026">
    <property type="entry name" value="ATP synthase subunit beta"/>
    <property type="match status" value="1"/>
</dbReference>
<dbReference type="Gene3D" id="2.40.10.170">
    <property type="match status" value="1"/>
</dbReference>
<dbReference type="Gene3D" id="1.10.1140.10">
    <property type="entry name" value="Bovine Mitochondrial F1-atpase, Atp Synthase Beta Chain, Chain D, domain 3"/>
    <property type="match status" value="1"/>
</dbReference>
<dbReference type="Gene3D" id="3.40.50.300">
    <property type="entry name" value="P-loop containing nucleotide triphosphate hydrolases"/>
    <property type="match status" value="1"/>
</dbReference>
<dbReference type="HAMAP" id="MF_01347">
    <property type="entry name" value="ATP_synth_beta_bact"/>
    <property type="match status" value="1"/>
</dbReference>
<dbReference type="InterPro" id="IPR003593">
    <property type="entry name" value="AAA+_ATPase"/>
</dbReference>
<dbReference type="InterPro" id="IPR055190">
    <property type="entry name" value="ATP-synt_VA_C"/>
</dbReference>
<dbReference type="InterPro" id="IPR005722">
    <property type="entry name" value="ATP_synth_F1_bsu"/>
</dbReference>
<dbReference type="InterPro" id="IPR020003">
    <property type="entry name" value="ATPase_a/bsu_AS"/>
</dbReference>
<dbReference type="InterPro" id="IPR050053">
    <property type="entry name" value="ATPase_alpha/beta_chains"/>
</dbReference>
<dbReference type="InterPro" id="IPR004100">
    <property type="entry name" value="ATPase_F1/V1/A1_a/bsu_N"/>
</dbReference>
<dbReference type="InterPro" id="IPR036121">
    <property type="entry name" value="ATPase_F1/V1/A1_a/bsu_N_sf"/>
</dbReference>
<dbReference type="InterPro" id="IPR000194">
    <property type="entry name" value="ATPase_F1/V1/A1_a/bsu_nucl-bd"/>
</dbReference>
<dbReference type="InterPro" id="IPR024034">
    <property type="entry name" value="ATPase_F1/V1_b/a_C"/>
</dbReference>
<dbReference type="InterPro" id="IPR027417">
    <property type="entry name" value="P-loop_NTPase"/>
</dbReference>
<dbReference type="NCBIfam" id="TIGR01039">
    <property type="entry name" value="atpD"/>
    <property type="match status" value="1"/>
</dbReference>
<dbReference type="PANTHER" id="PTHR15184">
    <property type="entry name" value="ATP SYNTHASE"/>
    <property type="match status" value="1"/>
</dbReference>
<dbReference type="PANTHER" id="PTHR15184:SF71">
    <property type="entry name" value="ATP SYNTHASE SUBUNIT BETA, MITOCHONDRIAL"/>
    <property type="match status" value="1"/>
</dbReference>
<dbReference type="Pfam" id="PF00006">
    <property type="entry name" value="ATP-synt_ab"/>
    <property type="match status" value="1"/>
</dbReference>
<dbReference type="Pfam" id="PF02874">
    <property type="entry name" value="ATP-synt_ab_N"/>
    <property type="match status" value="1"/>
</dbReference>
<dbReference type="Pfam" id="PF22919">
    <property type="entry name" value="ATP-synt_VA_C"/>
    <property type="match status" value="1"/>
</dbReference>
<dbReference type="PIRSF" id="PIRSF039072">
    <property type="entry name" value="ATPase_subunit_beta"/>
    <property type="match status" value="1"/>
</dbReference>
<dbReference type="SMART" id="SM00382">
    <property type="entry name" value="AAA"/>
    <property type="match status" value="1"/>
</dbReference>
<dbReference type="SUPFAM" id="SSF47917">
    <property type="entry name" value="C-terminal domain of alpha and beta subunits of F1 ATP synthase"/>
    <property type="match status" value="1"/>
</dbReference>
<dbReference type="SUPFAM" id="SSF50615">
    <property type="entry name" value="N-terminal domain of alpha and beta subunits of F1 ATP synthase"/>
    <property type="match status" value="1"/>
</dbReference>
<dbReference type="SUPFAM" id="SSF52540">
    <property type="entry name" value="P-loop containing nucleoside triphosphate hydrolases"/>
    <property type="match status" value="1"/>
</dbReference>
<dbReference type="PROSITE" id="PS00152">
    <property type="entry name" value="ATPASE_ALPHA_BETA"/>
    <property type="match status" value="1"/>
</dbReference>